<proteinExistence type="inferred from homology"/>
<gene>
    <name evidence="1" type="primary">dxr</name>
    <name type="ordered locus">Arad_4263</name>
</gene>
<reference key="1">
    <citation type="journal article" date="2009" name="J. Bacteriol.">
        <title>Genome sequences of three Agrobacterium biovars help elucidate the evolution of multichromosome genomes in bacteria.</title>
        <authorList>
            <person name="Slater S.C."/>
            <person name="Goldman B.S."/>
            <person name="Goodner B."/>
            <person name="Setubal J.C."/>
            <person name="Farrand S.K."/>
            <person name="Nester E.W."/>
            <person name="Burr T.J."/>
            <person name="Banta L."/>
            <person name="Dickerman A.W."/>
            <person name="Paulsen I."/>
            <person name="Otten L."/>
            <person name="Suen G."/>
            <person name="Welch R."/>
            <person name="Almeida N.F."/>
            <person name="Arnold F."/>
            <person name="Burton O.T."/>
            <person name="Du Z."/>
            <person name="Ewing A."/>
            <person name="Godsy E."/>
            <person name="Heisel S."/>
            <person name="Houmiel K.L."/>
            <person name="Jhaveri J."/>
            <person name="Lu J."/>
            <person name="Miller N.M."/>
            <person name="Norton S."/>
            <person name="Chen Q."/>
            <person name="Phoolcharoen W."/>
            <person name="Ohlin V."/>
            <person name="Ondrusek D."/>
            <person name="Pride N."/>
            <person name="Stricklin S.L."/>
            <person name="Sun J."/>
            <person name="Wheeler C."/>
            <person name="Wilson L."/>
            <person name="Zhu H."/>
            <person name="Wood D.W."/>
        </authorList>
    </citation>
    <scope>NUCLEOTIDE SEQUENCE [LARGE SCALE GENOMIC DNA]</scope>
    <source>
        <strain>K84 / ATCC BAA-868</strain>
    </source>
</reference>
<keyword id="KW-0414">Isoprene biosynthesis</keyword>
<keyword id="KW-0464">Manganese</keyword>
<keyword id="KW-0479">Metal-binding</keyword>
<keyword id="KW-0521">NADP</keyword>
<keyword id="KW-0560">Oxidoreductase</keyword>
<organism>
    <name type="scientific">Rhizobium rhizogenes (strain K84 / ATCC BAA-868)</name>
    <name type="common">Agrobacterium radiobacter</name>
    <dbReference type="NCBI Taxonomy" id="311403"/>
    <lineage>
        <taxon>Bacteria</taxon>
        <taxon>Pseudomonadati</taxon>
        <taxon>Pseudomonadota</taxon>
        <taxon>Alphaproteobacteria</taxon>
        <taxon>Hyphomicrobiales</taxon>
        <taxon>Rhizobiaceae</taxon>
        <taxon>Rhizobium/Agrobacterium group</taxon>
        <taxon>Rhizobium</taxon>
    </lineage>
</organism>
<name>DXR_RHIR8</name>
<dbReference type="EC" id="1.1.1.267" evidence="1"/>
<dbReference type="EMBL" id="CP000628">
    <property type="protein sequence ID" value="ACM28006.1"/>
    <property type="molecule type" value="Genomic_DNA"/>
</dbReference>
<dbReference type="RefSeq" id="WP_012652616.1">
    <property type="nucleotide sequence ID" value="NC_011985.1"/>
</dbReference>
<dbReference type="SMR" id="B9JBW0"/>
<dbReference type="STRING" id="311403.Arad_4263"/>
<dbReference type="GeneID" id="86849872"/>
<dbReference type="KEGG" id="ara:Arad_4263"/>
<dbReference type="eggNOG" id="COG0743">
    <property type="taxonomic scope" value="Bacteria"/>
</dbReference>
<dbReference type="HOGENOM" id="CLU_035714_4_0_5"/>
<dbReference type="UniPathway" id="UPA00056">
    <property type="reaction ID" value="UER00092"/>
</dbReference>
<dbReference type="Proteomes" id="UP000001600">
    <property type="component" value="Chromosome 1"/>
</dbReference>
<dbReference type="GO" id="GO:0030604">
    <property type="term" value="F:1-deoxy-D-xylulose-5-phosphate reductoisomerase activity"/>
    <property type="evidence" value="ECO:0007669"/>
    <property type="project" value="UniProtKB-UniRule"/>
</dbReference>
<dbReference type="GO" id="GO:0030145">
    <property type="term" value="F:manganese ion binding"/>
    <property type="evidence" value="ECO:0007669"/>
    <property type="project" value="TreeGrafter"/>
</dbReference>
<dbReference type="GO" id="GO:0070402">
    <property type="term" value="F:NADPH binding"/>
    <property type="evidence" value="ECO:0007669"/>
    <property type="project" value="InterPro"/>
</dbReference>
<dbReference type="GO" id="GO:0051484">
    <property type="term" value="P:isopentenyl diphosphate biosynthetic process, methylerythritol 4-phosphate pathway involved in terpenoid biosynthetic process"/>
    <property type="evidence" value="ECO:0007669"/>
    <property type="project" value="TreeGrafter"/>
</dbReference>
<dbReference type="FunFam" id="3.40.50.720:FF:000045">
    <property type="entry name" value="1-deoxy-D-xylulose 5-phosphate reductoisomerase"/>
    <property type="match status" value="1"/>
</dbReference>
<dbReference type="Gene3D" id="1.10.1740.10">
    <property type="match status" value="1"/>
</dbReference>
<dbReference type="Gene3D" id="3.40.50.720">
    <property type="entry name" value="NAD(P)-binding Rossmann-like Domain"/>
    <property type="match status" value="1"/>
</dbReference>
<dbReference type="HAMAP" id="MF_00183">
    <property type="entry name" value="DXP_reductoisom"/>
    <property type="match status" value="1"/>
</dbReference>
<dbReference type="InterPro" id="IPR003821">
    <property type="entry name" value="DXP_reductoisomerase"/>
</dbReference>
<dbReference type="InterPro" id="IPR013644">
    <property type="entry name" value="DXP_reductoisomerase_C"/>
</dbReference>
<dbReference type="InterPro" id="IPR013512">
    <property type="entry name" value="DXP_reductoisomerase_N"/>
</dbReference>
<dbReference type="InterPro" id="IPR026877">
    <property type="entry name" value="DXPR_C"/>
</dbReference>
<dbReference type="InterPro" id="IPR036169">
    <property type="entry name" value="DXPR_C_sf"/>
</dbReference>
<dbReference type="InterPro" id="IPR036291">
    <property type="entry name" value="NAD(P)-bd_dom_sf"/>
</dbReference>
<dbReference type="NCBIfam" id="TIGR00243">
    <property type="entry name" value="Dxr"/>
    <property type="match status" value="1"/>
</dbReference>
<dbReference type="PANTHER" id="PTHR30525">
    <property type="entry name" value="1-DEOXY-D-XYLULOSE 5-PHOSPHATE REDUCTOISOMERASE"/>
    <property type="match status" value="1"/>
</dbReference>
<dbReference type="PANTHER" id="PTHR30525:SF0">
    <property type="entry name" value="1-DEOXY-D-XYLULOSE 5-PHOSPHATE REDUCTOISOMERASE, CHLOROPLASTIC"/>
    <property type="match status" value="1"/>
</dbReference>
<dbReference type="Pfam" id="PF08436">
    <property type="entry name" value="DXP_redisom_C"/>
    <property type="match status" value="1"/>
</dbReference>
<dbReference type="Pfam" id="PF02670">
    <property type="entry name" value="DXP_reductoisom"/>
    <property type="match status" value="1"/>
</dbReference>
<dbReference type="Pfam" id="PF13288">
    <property type="entry name" value="DXPR_C"/>
    <property type="match status" value="1"/>
</dbReference>
<dbReference type="PIRSF" id="PIRSF006205">
    <property type="entry name" value="Dxp_reductismrs"/>
    <property type="match status" value="1"/>
</dbReference>
<dbReference type="SUPFAM" id="SSF69055">
    <property type="entry name" value="1-deoxy-D-xylulose-5-phosphate reductoisomerase, C-terminal domain"/>
    <property type="match status" value="1"/>
</dbReference>
<dbReference type="SUPFAM" id="SSF55347">
    <property type="entry name" value="Glyceraldehyde-3-phosphate dehydrogenase-like, C-terminal domain"/>
    <property type="match status" value="1"/>
</dbReference>
<dbReference type="SUPFAM" id="SSF51735">
    <property type="entry name" value="NAD(P)-binding Rossmann-fold domains"/>
    <property type="match status" value="1"/>
</dbReference>
<sequence>MTTGSKAKRRLTILGSTGSIGQNTLDVIAQLGGRDAFEIAAITGHDNIDLLASQAKACGAALAVTANEDRYQALKDALAGTGIAAAAGRNALIEAASIPSDWVMAAIVGTAGLAPTLEAARRGADIALANKECLVSAGDLFVRAVAEGGGRLIPVDSEHSAIFQALEDDQQHAVERIILTASGGPFRTWSREQMANVTPATARAHPNWSMGFKISIGSASMFNKALEMIEAKHLFNVRPEQIEVVVHPQSVIHSMVGYTDGSVLAQLGCPDMRTAIGYALTYPSRTKLDVERLDFTKLARLDFEAPDEVRFPALRLARTAMERGGLQGAIMNAAEEIAFHAFVDGRIGFLEMADIAEAVMDQMIATGTAETMDAVFAADEEARRRAGVLVAQREKAA</sequence>
<accession>B9JBW0</accession>
<evidence type="ECO:0000255" key="1">
    <source>
        <dbReference type="HAMAP-Rule" id="MF_00183"/>
    </source>
</evidence>
<protein>
    <recommendedName>
        <fullName evidence="1">1-deoxy-D-xylulose 5-phosphate reductoisomerase</fullName>
        <shortName evidence="1">DXP reductoisomerase</shortName>
        <ecNumber evidence="1">1.1.1.267</ecNumber>
    </recommendedName>
    <alternativeName>
        <fullName evidence="1">1-deoxyxylulose-5-phosphate reductoisomerase</fullName>
    </alternativeName>
    <alternativeName>
        <fullName evidence="1">2-C-methyl-D-erythritol 4-phosphate synthase</fullName>
    </alternativeName>
</protein>
<comment type="function">
    <text evidence="1">Catalyzes the NADPH-dependent rearrangement and reduction of 1-deoxy-D-xylulose-5-phosphate (DXP) to 2-C-methyl-D-erythritol 4-phosphate (MEP).</text>
</comment>
<comment type="catalytic activity">
    <reaction evidence="1">
        <text>2-C-methyl-D-erythritol 4-phosphate + NADP(+) = 1-deoxy-D-xylulose 5-phosphate + NADPH + H(+)</text>
        <dbReference type="Rhea" id="RHEA:13717"/>
        <dbReference type="ChEBI" id="CHEBI:15378"/>
        <dbReference type="ChEBI" id="CHEBI:57783"/>
        <dbReference type="ChEBI" id="CHEBI:57792"/>
        <dbReference type="ChEBI" id="CHEBI:58262"/>
        <dbReference type="ChEBI" id="CHEBI:58349"/>
        <dbReference type="EC" id="1.1.1.267"/>
    </reaction>
    <physiologicalReaction direction="right-to-left" evidence="1">
        <dbReference type="Rhea" id="RHEA:13719"/>
    </physiologicalReaction>
</comment>
<comment type="cofactor">
    <cofactor evidence="1">
        <name>Mg(2+)</name>
        <dbReference type="ChEBI" id="CHEBI:18420"/>
    </cofactor>
    <cofactor evidence="1">
        <name>Mn(2+)</name>
        <dbReference type="ChEBI" id="CHEBI:29035"/>
    </cofactor>
</comment>
<comment type="pathway">
    <text evidence="1">Isoprenoid biosynthesis; isopentenyl diphosphate biosynthesis via DXP pathway; isopentenyl diphosphate from 1-deoxy-D-xylulose 5-phosphate: step 1/6.</text>
</comment>
<comment type="similarity">
    <text evidence="1">Belongs to the DXR family.</text>
</comment>
<feature type="chain" id="PRO_1000189850" description="1-deoxy-D-xylulose 5-phosphate reductoisomerase">
    <location>
        <begin position="1"/>
        <end position="397"/>
    </location>
</feature>
<feature type="binding site" evidence="1">
    <location>
        <position position="17"/>
    </location>
    <ligand>
        <name>NADPH</name>
        <dbReference type="ChEBI" id="CHEBI:57783"/>
    </ligand>
</feature>
<feature type="binding site" evidence="1">
    <location>
        <position position="18"/>
    </location>
    <ligand>
        <name>NADPH</name>
        <dbReference type="ChEBI" id="CHEBI:57783"/>
    </ligand>
</feature>
<feature type="binding site" evidence="1">
    <location>
        <position position="19"/>
    </location>
    <ligand>
        <name>NADPH</name>
        <dbReference type="ChEBI" id="CHEBI:57783"/>
    </ligand>
</feature>
<feature type="binding site" evidence="1">
    <location>
        <position position="20"/>
    </location>
    <ligand>
        <name>NADPH</name>
        <dbReference type="ChEBI" id="CHEBI:57783"/>
    </ligand>
</feature>
<feature type="binding site" evidence="1">
    <location>
        <position position="47"/>
    </location>
    <ligand>
        <name>NADPH</name>
        <dbReference type="ChEBI" id="CHEBI:57783"/>
    </ligand>
</feature>
<feature type="binding site" evidence="1">
    <location>
        <position position="130"/>
    </location>
    <ligand>
        <name>NADPH</name>
        <dbReference type="ChEBI" id="CHEBI:57783"/>
    </ligand>
</feature>
<feature type="binding site" evidence="1">
    <location>
        <position position="131"/>
    </location>
    <ligand>
        <name>1-deoxy-D-xylulose 5-phosphate</name>
        <dbReference type="ChEBI" id="CHEBI:57792"/>
    </ligand>
</feature>
<feature type="binding site" evidence="1">
    <location>
        <position position="132"/>
    </location>
    <ligand>
        <name>NADPH</name>
        <dbReference type="ChEBI" id="CHEBI:57783"/>
    </ligand>
</feature>
<feature type="binding site" evidence="1">
    <location>
        <position position="156"/>
    </location>
    <ligand>
        <name>Mn(2+)</name>
        <dbReference type="ChEBI" id="CHEBI:29035"/>
    </ligand>
</feature>
<feature type="binding site" evidence="1">
    <location>
        <position position="157"/>
    </location>
    <ligand>
        <name>1-deoxy-D-xylulose 5-phosphate</name>
        <dbReference type="ChEBI" id="CHEBI:57792"/>
    </ligand>
</feature>
<feature type="binding site" evidence="1">
    <location>
        <position position="158"/>
    </location>
    <ligand>
        <name>1-deoxy-D-xylulose 5-phosphate</name>
        <dbReference type="ChEBI" id="CHEBI:57792"/>
    </ligand>
</feature>
<feature type="binding site" evidence="1">
    <location>
        <position position="158"/>
    </location>
    <ligand>
        <name>Mn(2+)</name>
        <dbReference type="ChEBI" id="CHEBI:29035"/>
    </ligand>
</feature>
<feature type="binding site" evidence="1">
    <location>
        <position position="182"/>
    </location>
    <ligand>
        <name>1-deoxy-D-xylulose 5-phosphate</name>
        <dbReference type="ChEBI" id="CHEBI:57792"/>
    </ligand>
</feature>
<feature type="binding site" evidence="1">
    <location>
        <position position="205"/>
    </location>
    <ligand>
        <name>1-deoxy-D-xylulose 5-phosphate</name>
        <dbReference type="ChEBI" id="CHEBI:57792"/>
    </ligand>
</feature>
<feature type="binding site" evidence="1">
    <location>
        <position position="211"/>
    </location>
    <ligand>
        <name>NADPH</name>
        <dbReference type="ChEBI" id="CHEBI:57783"/>
    </ligand>
</feature>
<feature type="binding site" evidence="1">
    <location>
        <position position="218"/>
    </location>
    <ligand>
        <name>1-deoxy-D-xylulose 5-phosphate</name>
        <dbReference type="ChEBI" id="CHEBI:57792"/>
    </ligand>
</feature>
<feature type="binding site" evidence="1">
    <location>
        <position position="223"/>
    </location>
    <ligand>
        <name>1-deoxy-D-xylulose 5-phosphate</name>
        <dbReference type="ChEBI" id="CHEBI:57792"/>
    </ligand>
</feature>
<feature type="binding site" evidence="1">
    <location>
        <position position="224"/>
    </location>
    <ligand>
        <name>1-deoxy-D-xylulose 5-phosphate</name>
        <dbReference type="ChEBI" id="CHEBI:57792"/>
    </ligand>
</feature>
<feature type="binding site" evidence="1">
    <location>
        <position position="227"/>
    </location>
    <ligand>
        <name>1-deoxy-D-xylulose 5-phosphate</name>
        <dbReference type="ChEBI" id="CHEBI:57792"/>
    </ligand>
</feature>
<feature type="binding site" evidence="1">
    <location>
        <position position="227"/>
    </location>
    <ligand>
        <name>Mn(2+)</name>
        <dbReference type="ChEBI" id="CHEBI:29035"/>
    </ligand>
</feature>